<comment type="function">
    <text>Antenna complexes are light-harvesting systems, which transfer the excitation energy to the reaction centers.</text>
</comment>
<comment type="subunit">
    <text>The core complex is formed by different alpha and beta chains, binding bacteriochlorophyll molecules, and arranged most probably in tetrameric structures disposed around the reaction center. The non-pigmented gamma chains may constitute additional components.</text>
</comment>
<comment type="subcellular location">
    <subcellularLocation>
        <location>Cell inner membrane</location>
        <topology>Single-pass type II membrane protein</topology>
    </subcellularLocation>
</comment>
<comment type="similarity">
    <text evidence="2">Belongs to the antenna complex beta subunit family.</text>
</comment>
<organism>
    <name type="scientific">Halorhodospira halochloris</name>
    <name type="common">Ectothiorhodospira halochloris</name>
    <dbReference type="NCBI Taxonomy" id="1052"/>
    <lineage>
        <taxon>Bacteria</taxon>
        <taxon>Pseudomonadati</taxon>
        <taxon>Pseudomonadota</taxon>
        <taxon>Gammaproteobacteria</taxon>
        <taxon>Chromatiales</taxon>
        <taxon>Ectothiorhodospiraceae</taxon>
        <taxon>Halorhodospira</taxon>
    </lineage>
</organism>
<reference key="1">
    <citation type="journal article" date="1992" name="Eur. J. Biochem.">
        <title>The primary structure of the antenna polypeptides of Ectothiorhodospira halochloris and Ectothiorhodospira halophila. Four core-type antenna polypeptides in E. halochloris and E. halophila.</title>
        <authorList>
            <person name="Wagner-Huber R."/>
            <person name="Brunisholz R.A."/>
            <person name="Bissig I."/>
            <person name="Frank G."/>
            <person name="Suter F."/>
            <person name="Zuber H."/>
        </authorList>
    </citation>
    <scope>PROTEIN SEQUENCE</scope>
    <source>
        <strain>ATCC 35916 / DSM 1059 / BN 9850 / A</strain>
    </source>
</reference>
<keyword id="KW-0042">Antenna complex</keyword>
<keyword id="KW-0076">Bacteriochlorophyll</keyword>
<keyword id="KW-0997">Cell inner membrane</keyword>
<keyword id="KW-1003">Cell membrane</keyword>
<keyword id="KW-0148">Chlorophyll</keyword>
<keyword id="KW-0157">Chromophore</keyword>
<keyword id="KW-0903">Direct protein sequencing</keyword>
<keyword id="KW-0437">Light-harvesting polypeptide</keyword>
<keyword id="KW-0460">Magnesium</keyword>
<keyword id="KW-0472">Membrane</keyword>
<keyword id="KW-0479">Metal-binding</keyword>
<keyword id="KW-0812">Transmembrane</keyword>
<keyword id="KW-1133">Transmembrane helix</keyword>
<accession>P80106</accession>
<dbReference type="PIR" id="S23286">
    <property type="entry name" value="S23286"/>
</dbReference>
<dbReference type="SMR" id="P80106"/>
<dbReference type="GO" id="GO:0030076">
    <property type="term" value="C:light-harvesting complex"/>
    <property type="evidence" value="ECO:0007669"/>
    <property type="project" value="UniProtKB-KW"/>
</dbReference>
<dbReference type="GO" id="GO:0005886">
    <property type="term" value="C:plasma membrane"/>
    <property type="evidence" value="ECO:0007669"/>
    <property type="project" value="UniProtKB-SubCell"/>
</dbReference>
<dbReference type="GO" id="GO:0042314">
    <property type="term" value="F:bacteriochlorophyll binding"/>
    <property type="evidence" value="ECO:0007669"/>
    <property type="project" value="UniProtKB-KW"/>
</dbReference>
<dbReference type="GO" id="GO:0046872">
    <property type="term" value="F:metal ion binding"/>
    <property type="evidence" value="ECO:0007669"/>
    <property type="project" value="UniProtKB-KW"/>
</dbReference>
<dbReference type="Gene3D" id="1.20.5.250">
    <property type="match status" value="1"/>
</dbReference>
<dbReference type="InterPro" id="IPR023624">
    <property type="entry name" value="Antenna_beta_dom_sf"/>
</dbReference>
<dbReference type="InterPro" id="IPR035889">
    <property type="entry name" value="Light-harvesting_complex"/>
</dbReference>
<dbReference type="SUPFAM" id="SSF56918">
    <property type="entry name" value="Light-harvesting complex subunits"/>
    <property type="match status" value="1"/>
</dbReference>
<proteinExistence type="evidence at protein level"/>
<evidence type="ECO:0000255" key="1"/>
<evidence type="ECO:0000305" key="2"/>
<protein>
    <recommendedName>
        <fullName>Light-harvesting protein B800/830/1020 beta-1 chain</fullName>
    </recommendedName>
    <alternativeName>
        <fullName>Antenna pigment protein beta-1 chain</fullName>
    </alternativeName>
    <alternativeName>
        <fullName>EHS-beta-1</fullName>
    </alternativeName>
</protein>
<name>LHB1_HALHR</name>
<sequence>ANDIRPLRDFEDEEAQEFHQAAVQAFFLYVAVAFVAHLPV</sequence>
<feature type="chain" id="PRO_0000099812" description="Light-harvesting protein B800/830/1020 beta-1 chain">
    <location>
        <begin position="1"/>
        <end position="40" status="greater than"/>
    </location>
</feature>
<feature type="topological domain" description="Cytoplasmic" evidence="1">
    <location>
        <begin position="1"/>
        <end position="20"/>
    </location>
</feature>
<feature type="transmembrane region" description="Helical" evidence="1">
    <location>
        <begin position="21"/>
        <end position="40" status="greater than"/>
    </location>
</feature>
<feature type="binding site" description="axial binding residue" evidence="1">
    <location>
        <position position="19"/>
    </location>
    <ligand>
        <name>a bacteriochlorophyll</name>
        <dbReference type="ChEBI" id="CHEBI:38201"/>
    </ligand>
    <ligandPart>
        <name>Mg</name>
        <dbReference type="ChEBI" id="CHEBI:25107"/>
    </ligandPart>
</feature>
<feature type="binding site" description="axial binding residue" evidence="1">
    <location>
        <position position="37"/>
    </location>
    <ligand>
        <name>a bacteriochlorophyll</name>
        <dbReference type="ChEBI" id="CHEBI:38201"/>
    </ligand>
    <ligandPart>
        <name>Mg</name>
        <dbReference type="ChEBI" id="CHEBI:25107"/>
    </ligandPart>
</feature>
<feature type="non-terminal residue">
    <location>
        <position position="40"/>
    </location>
</feature>